<proteinExistence type="inferred from homology"/>
<dbReference type="EMBL" id="CP000551">
    <property type="protein sequence ID" value="ABM71101.1"/>
    <property type="molecule type" value="Genomic_DNA"/>
</dbReference>
<dbReference type="RefSeq" id="WP_002808065.1">
    <property type="nucleotide sequence ID" value="NC_008816.1"/>
</dbReference>
<dbReference type="SMR" id="A2BTJ0"/>
<dbReference type="STRING" id="146891.A9601_18181"/>
<dbReference type="KEGG" id="pmb:A9601_18181"/>
<dbReference type="eggNOG" id="COG0236">
    <property type="taxonomic scope" value="Bacteria"/>
</dbReference>
<dbReference type="HOGENOM" id="CLU_108696_5_1_3"/>
<dbReference type="OrthoDB" id="9804551at2"/>
<dbReference type="UniPathway" id="UPA00094"/>
<dbReference type="Proteomes" id="UP000002590">
    <property type="component" value="Chromosome"/>
</dbReference>
<dbReference type="GO" id="GO:0005829">
    <property type="term" value="C:cytosol"/>
    <property type="evidence" value="ECO:0007669"/>
    <property type="project" value="TreeGrafter"/>
</dbReference>
<dbReference type="GO" id="GO:0016020">
    <property type="term" value="C:membrane"/>
    <property type="evidence" value="ECO:0007669"/>
    <property type="project" value="GOC"/>
</dbReference>
<dbReference type="GO" id="GO:0000035">
    <property type="term" value="F:acyl binding"/>
    <property type="evidence" value="ECO:0007669"/>
    <property type="project" value="TreeGrafter"/>
</dbReference>
<dbReference type="GO" id="GO:0000036">
    <property type="term" value="F:acyl carrier activity"/>
    <property type="evidence" value="ECO:0007669"/>
    <property type="project" value="UniProtKB-UniRule"/>
</dbReference>
<dbReference type="GO" id="GO:0009245">
    <property type="term" value="P:lipid A biosynthetic process"/>
    <property type="evidence" value="ECO:0007669"/>
    <property type="project" value="TreeGrafter"/>
</dbReference>
<dbReference type="FunFam" id="1.10.1200.10:FF:000003">
    <property type="entry name" value="Acyl carrier protein"/>
    <property type="match status" value="1"/>
</dbReference>
<dbReference type="Gene3D" id="1.10.1200.10">
    <property type="entry name" value="ACP-like"/>
    <property type="match status" value="1"/>
</dbReference>
<dbReference type="HAMAP" id="MF_01217">
    <property type="entry name" value="Acyl_carrier"/>
    <property type="match status" value="1"/>
</dbReference>
<dbReference type="InterPro" id="IPR003231">
    <property type="entry name" value="ACP"/>
</dbReference>
<dbReference type="InterPro" id="IPR036736">
    <property type="entry name" value="ACP-like_sf"/>
</dbReference>
<dbReference type="InterPro" id="IPR009081">
    <property type="entry name" value="PP-bd_ACP"/>
</dbReference>
<dbReference type="InterPro" id="IPR006162">
    <property type="entry name" value="Ppantetheine_attach_site"/>
</dbReference>
<dbReference type="NCBIfam" id="TIGR00517">
    <property type="entry name" value="acyl_carrier"/>
    <property type="match status" value="1"/>
</dbReference>
<dbReference type="NCBIfam" id="NF002148">
    <property type="entry name" value="PRK00982.1-2"/>
    <property type="match status" value="1"/>
</dbReference>
<dbReference type="NCBIfam" id="NF002150">
    <property type="entry name" value="PRK00982.1-4"/>
    <property type="match status" value="1"/>
</dbReference>
<dbReference type="NCBIfam" id="NF002151">
    <property type="entry name" value="PRK00982.1-5"/>
    <property type="match status" value="1"/>
</dbReference>
<dbReference type="PANTHER" id="PTHR20863">
    <property type="entry name" value="ACYL CARRIER PROTEIN"/>
    <property type="match status" value="1"/>
</dbReference>
<dbReference type="PANTHER" id="PTHR20863:SF76">
    <property type="entry name" value="CARRIER DOMAIN-CONTAINING PROTEIN"/>
    <property type="match status" value="1"/>
</dbReference>
<dbReference type="Pfam" id="PF00550">
    <property type="entry name" value="PP-binding"/>
    <property type="match status" value="1"/>
</dbReference>
<dbReference type="SUPFAM" id="SSF47336">
    <property type="entry name" value="ACP-like"/>
    <property type="match status" value="1"/>
</dbReference>
<dbReference type="PROSITE" id="PS50075">
    <property type="entry name" value="CARRIER"/>
    <property type="match status" value="1"/>
</dbReference>
<dbReference type="PROSITE" id="PS00012">
    <property type="entry name" value="PHOSPHOPANTETHEINE"/>
    <property type="match status" value="1"/>
</dbReference>
<feature type="chain" id="PRO_1000066657" description="Acyl carrier protein">
    <location>
        <begin position="1"/>
        <end position="79"/>
    </location>
</feature>
<feature type="domain" description="Carrier" evidence="2">
    <location>
        <begin position="3"/>
        <end position="78"/>
    </location>
</feature>
<feature type="modified residue" description="O-(pantetheine 4'-phosphoryl)serine" evidence="2">
    <location>
        <position position="38"/>
    </location>
</feature>
<reference key="1">
    <citation type="journal article" date="2007" name="PLoS Genet.">
        <title>Patterns and implications of gene gain and loss in the evolution of Prochlorococcus.</title>
        <authorList>
            <person name="Kettler G.C."/>
            <person name="Martiny A.C."/>
            <person name="Huang K."/>
            <person name="Zucker J."/>
            <person name="Coleman M.L."/>
            <person name="Rodrigue S."/>
            <person name="Chen F."/>
            <person name="Lapidus A."/>
            <person name="Ferriera S."/>
            <person name="Johnson J."/>
            <person name="Steglich C."/>
            <person name="Church G.M."/>
            <person name="Richardson P."/>
            <person name="Chisholm S.W."/>
        </authorList>
    </citation>
    <scope>NUCLEOTIDE SEQUENCE [LARGE SCALE GENOMIC DNA]</scope>
    <source>
        <strain>AS9601</strain>
    </source>
</reference>
<keyword id="KW-0963">Cytoplasm</keyword>
<keyword id="KW-0275">Fatty acid biosynthesis</keyword>
<keyword id="KW-0276">Fatty acid metabolism</keyword>
<keyword id="KW-0444">Lipid biosynthesis</keyword>
<keyword id="KW-0443">Lipid metabolism</keyword>
<keyword id="KW-0596">Phosphopantetheine</keyword>
<keyword id="KW-0597">Phosphoprotein</keyword>
<name>ACP_PROMS</name>
<gene>
    <name evidence="1" type="primary">acpP</name>
    <name type="ordered locus">A9601_18181</name>
</gene>
<comment type="function">
    <text evidence="1">Carrier of the growing fatty acid chain in fatty acid biosynthesis.</text>
</comment>
<comment type="pathway">
    <text evidence="1">Lipid metabolism; fatty acid biosynthesis.</text>
</comment>
<comment type="subcellular location">
    <subcellularLocation>
        <location evidence="1">Cytoplasm</location>
    </subcellularLocation>
</comment>
<comment type="PTM">
    <text evidence="1">4'-phosphopantetheine is transferred from CoA to a specific serine of apo-ACP by AcpS. This modification is essential for activity because fatty acids are bound in thioester linkage to the sulfhydryl of the prosthetic group.</text>
</comment>
<comment type="similarity">
    <text evidence="1">Belongs to the acyl carrier protein (ACP) family.</text>
</comment>
<protein>
    <recommendedName>
        <fullName evidence="1">Acyl carrier protein</fullName>
        <shortName evidence="1">ACP</shortName>
    </recommendedName>
</protein>
<organism>
    <name type="scientific">Prochlorococcus marinus (strain AS9601)</name>
    <dbReference type="NCBI Taxonomy" id="146891"/>
    <lineage>
        <taxon>Bacteria</taxon>
        <taxon>Bacillati</taxon>
        <taxon>Cyanobacteriota</taxon>
        <taxon>Cyanophyceae</taxon>
        <taxon>Synechococcales</taxon>
        <taxon>Prochlorococcaceae</taxon>
        <taxon>Prochlorococcus</taxon>
    </lineage>
</organism>
<sequence>MSQEILEKVCSIVSEQLSVEAGEVKSDSNFQNDLGADSLDTVELVMALEEAFDIEIPDEAAEGIATVGDAVKFIEEKKG</sequence>
<accession>A2BTJ0</accession>
<evidence type="ECO:0000255" key="1">
    <source>
        <dbReference type="HAMAP-Rule" id="MF_01217"/>
    </source>
</evidence>
<evidence type="ECO:0000255" key="2">
    <source>
        <dbReference type="PROSITE-ProRule" id="PRU00258"/>
    </source>
</evidence>